<reference key="1">
    <citation type="journal article" date="2007" name="Nat. Biotechnol.">
        <title>Comparative analysis of the complete genome sequence of the plant growth-promoting bacterium Bacillus amyloliquefaciens FZB42.</title>
        <authorList>
            <person name="Chen X.H."/>
            <person name="Koumoutsi A."/>
            <person name="Scholz R."/>
            <person name="Eisenreich A."/>
            <person name="Schneider K."/>
            <person name="Heinemeyer I."/>
            <person name="Morgenstern B."/>
            <person name="Voss B."/>
            <person name="Hess W.R."/>
            <person name="Reva O."/>
            <person name="Junge H."/>
            <person name="Voigt B."/>
            <person name="Jungblut P.R."/>
            <person name="Vater J."/>
            <person name="Suessmuth R."/>
            <person name="Liesegang H."/>
            <person name="Strittmatter A."/>
            <person name="Gottschalk G."/>
            <person name="Borriss R."/>
        </authorList>
    </citation>
    <scope>NUCLEOTIDE SEQUENCE [LARGE SCALE GENOMIC DNA]</scope>
    <source>
        <strain>DSM 23117 / BGSC 10A6 / LMG 26770 / FZB42</strain>
    </source>
</reference>
<keyword id="KW-0328">Glycosyltransferase</keyword>
<keyword id="KW-0694">RNA-binding</keyword>
<keyword id="KW-0804">Transcription</keyword>
<keyword id="KW-0805">Transcription regulation</keyword>
<keyword id="KW-0806">Transcription termination</keyword>
<keyword id="KW-0808">Transferase</keyword>
<protein>
    <recommendedName>
        <fullName evidence="1">Bifunctional protein PyrR</fullName>
    </recommendedName>
    <domain>
        <recommendedName>
            <fullName evidence="1">Pyrimidine operon regulatory protein</fullName>
        </recommendedName>
    </domain>
    <domain>
        <recommendedName>
            <fullName evidence="1">Uracil phosphoribosyltransferase</fullName>
            <shortName evidence="1">UPRTase</shortName>
            <ecNumber evidence="1">2.4.2.9</ecNumber>
        </recommendedName>
    </domain>
</protein>
<sequence length="181" mass="20225">MNQKAVILDEQAIRRALTRIAHEMIERNKGMNDCILVGIKTRGIYLAKRLAERIEQIEGNPVTVGEIDITLYRDDLTKKTSNEEPLVKGADIPADITDQKVIVVDDVLYTGRTVRAAMDALVDVGRPSSIQLAVLVDRGHRELPIRADYIGKNIPTSKAEKVMVQLSEVDQTDMVAIYENE</sequence>
<feature type="chain" id="PRO_1000053819" description="Bifunctional protein PyrR">
    <location>
        <begin position="1"/>
        <end position="181"/>
    </location>
</feature>
<feature type="short sequence motif" description="PRPP-binding" evidence="1">
    <location>
        <begin position="101"/>
        <end position="113"/>
    </location>
</feature>
<accession>A7Z4G7</accession>
<name>PYRR_BACVZ</name>
<comment type="function">
    <text evidence="1">Regulates transcriptional attenuation of the pyrimidine nucleotide (pyr) operon by binding in a uridine-dependent manner to specific sites on pyr mRNA. This disrupts an antiterminator hairpin in the RNA and favors formation of a downstream transcription terminator, leading to a reduced expression of downstream genes.</text>
</comment>
<comment type="function">
    <text evidence="1">Also displays a weak uracil phosphoribosyltransferase activity which is not physiologically significant.</text>
</comment>
<comment type="catalytic activity">
    <reaction evidence="1">
        <text>UMP + diphosphate = 5-phospho-alpha-D-ribose 1-diphosphate + uracil</text>
        <dbReference type="Rhea" id="RHEA:13017"/>
        <dbReference type="ChEBI" id="CHEBI:17568"/>
        <dbReference type="ChEBI" id="CHEBI:33019"/>
        <dbReference type="ChEBI" id="CHEBI:57865"/>
        <dbReference type="ChEBI" id="CHEBI:58017"/>
        <dbReference type="EC" id="2.4.2.9"/>
    </reaction>
</comment>
<comment type="subunit">
    <text evidence="1">Homodimer and homohexamer; in equilibrium.</text>
</comment>
<comment type="similarity">
    <text evidence="1">Belongs to the purine/pyrimidine phosphoribosyltransferase family. PyrR subfamily.</text>
</comment>
<gene>
    <name evidence="1" type="primary">pyrR</name>
    <name type="ordered locus">RBAM_015300</name>
</gene>
<dbReference type="EC" id="2.4.2.9" evidence="1"/>
<dbReference type="EMBL" id="CP000560">
    <property type="protein sequence ID" value="ABS73893.1"/>
    <property type="molecule type" value="Genomic_DNA"/>
</dbReference>
<dbReference type="RefSeq" id="WP_003154392.1">
    <property type="nucleotide sequence ID" value="NC_009725.2"/>
</dbReference>
<dbReference type="SMR" id="A7Z4G7"/>
<dbReference type="GeneID" id="93080663"/>
<dbReference type="KEGG" id="bay:RBAM_015300"/>
<dbReference type="HOGENOM" id="CLU_094234_2_1_9"/>
<dbReference type="Proteomes" id="UP000001120">
    <property type="component" value="Chromosome"/>
</dbReference>
<dbReference type="GO" id="GO:0003723">
    <property type="term" value="F:RNA binding"/>
    <property type="evidence" value="ECO:0007669"/>
    <property type="project" value="UniProtKB-UniRule"/>
</dbReference>
<dbReference type="GO" id="GO:0004845">
    <property type="term" value="F:uracil phosphoribosyltransferase activity"/>
    <property type="evidence" value="ECO:0007669"/>
    <property type="project" value="UniProtKB-UniRule"/>
</dbReference>
<dbReference type="GO" id="GO:0006353">
    <property type="term" value="P:DNA-templated transcription termination"/>
    <property type="evidence" value="ECO:0007669"/>
    <property type="project" value="UniProtKB-UniRule"/>
</dbReference>
<dbReference type="CDD" id="cd06223">
    <property type="entry name" value="PRTases_typeI"/>
    <property type="match status" value="1"/>
</dbReference>
<dbReference type="FunFam" id="3.40.50.2020:FF:000020">
    <property type="entry name" value="Bifunctional protein PyrR"/>
    <property type="match status" value="1"/>
</dbReference>
<dbReference type="Gene3D" id="3.40.50.2020">
    <property type="match status" value="1"/>
</dbReference>
<dbReference type="HAMAP" id="MF_01219">
    <property type="entry name" value="PyrR"/>
    <property type="match status" value="1"/>
</dbReference>
<dbReference type="InterPro" id="IPR000836">
    <property type="entry name" value="PRibTrfase_dom"/>
</dbReference>
<dbReference type="InterPro" id="IPR029057">
    <property type="entry name" value="PRTase-like"/>
</dbReference>
<dbReference type="InterPro" id="IPR023050">
    <property type="entry name" value="PyrR"/>
</dbReference>
<dbReference type="InterPro" id="IPR050137">
    <property type="entry name" value="PyrR_bifunctional"/>
</dbReference>
<dbReference type="NCBIfam" id="NF003545">
    <property type="entry name" value="PRK05205.1-1"/>
    <property type="match status" value="1"/>
</dbReference>
<dbReference type="NCBIfam" id="NF003547">
    <property type="entry name" value="PRK05205.1-3"/>
    <property type="match status" value="1"/>
</dbReference>
<dbReference type="NCBIfam" id="NF003548">
    <property type="entry name" value="PRK05205.1-4"/>
    <property type="match status" value="1"/>
</dbReference>
<dbReference type="NCBIfam" id="NF003549">
    <property type="entry name" value="PRK05205.1-5"/>
    <property type="match status" value="1"/>
</dbReference>
<dbReference type="PANTHER" id="PTHR11608">
    <property type="entry name" value="BIFUNCTIONAL PROTEIN PYRR"/>
    <property type="match status" value="1"/>
</dbReference>
<dbReference type="PANTHER" id="PTHR11608:SF0">
    <property type="entry name" value="BIFUNCTIONAL PROTEIN PYRR"/>
    <property type="match status" value="1"/>
</dbReference>
<dbReference type="Pfam" id="PF00156">
    <property type="entry name" value="Pribosyltran"/>
    <property type="match status" value="1"/>
</dbReference>
<dbReference type="SUPFAM" id="SSF53271">
    <property type="entry name" value="PRTase-like"/>
    <property type="match status" value="1"/>
</dbReference>
<proteinExistence type="inferred from homology"/>
<evidence type="ECO:0000255" key="1">
    <source>
        <dbReference type="HAMAP-Rule" id="MF_01219"/>
    </source>
</evidence>
<organism>
    <name type="scientific">Bacillus velezensis (strain DSM 23117 / BGSC 10A6 / LMG 26770 / FZB42)</name>
    <name type="common">Bacillus amyloliquefaciens subsp. plantarum</name>
    <dbReference type="NCBI Taxonomy" id="326423"/>
    <lineage>
        <taxon>Bacteria</taxon>
        <taxon>Bacillati</taxon>
        <taxon>Bacillota</taxon>
        <taxon>Bacilli</taxon>
        <taxon>Bacillales</taxon>
        <taxon>Bacillaceae</taxon>
        <taxon>Bacillus</taxon>
        <taxon>Bacillus amyloliquefaciens group</taxon>
    </lineage>
</organism>